<gene>
    <name type="primary">vapB4</name>
    <name type="ordered locus">PF0774</name>
</gene>
<dbReference type="EMBL" id="AE009950">
    <property type="protein sequence ID" value="AAL80898.1"/>
    <property type="status" value="ALT_INIT"/>
    <property type="molecule type" value="Genomic_DNA"/>
</dbReference>
<dbReference type="RefSeq" id="WP_014835226.1">
    <property type="nucleotide sequence ID" value="NZ_CP023154.1"/>
</dbReference>
<dbReference type="SMR" id="Q8U2Q8"/>
<dbReference type="STRING" id="186497.PF0774"/>
<dbReference type="PaxDb" id="186497-PF0774"/>
<dbReference type="KEGG" id="pfu:PF0774"/>
<dbReference type="PATRIC" id="fig|186497.12.peg.814"/>
<dbReference type="eggNOG" id="arCOG02681">
    <property type="taxonomic scope" value="Archaea"/>
</dbReference>
<dbReference type="HOGENOM" id="CLU_170073_3_0_2"/>
<dbReference type="Proteomes" id="UP000001013">
    <property type="component" value="Chromosome"/>
</dbReference>
<dbReference type="HAMAP" id="MF_00794">
    <property type="entry name" value="UPF0330"/>
    <property type="match status" value="1"/>
</dbReference>
<dbReference type="InterPro" id="IPR003847">
    <property type="entry name" value="Put_antitoxin"/>
</dbReference>
<dbReference type="Pfam" id="PF02697">
    <property type="entry name" value="VAPB_antitox"/>
    <property type="match status" value="1"/>
</dbReference>
<evidence type="ECO:0000255" key="1">
    <source>
        <dbReference type="HAMAP-Rule" id="MF_00794"/>
    </source>
</evidence>
<evidence type="ECO:0000305" key="2"/>
<protein>
    <recommendedName>
        <fullName evidence="1">Putative antitoxin VapB4</fullName>
    </recommendedName>
</protein>
<keyword id="KW-1185">Reference proteome</keyword>
<keyword id="KW-1277">Toxin-antitoxin system</keyword>
<comment type="function">
    <text evidence="1">Possibly the antitoxin component of a type II toxin-antitoxin (TA) system. Its cognate toxin is VapC4 (Potential).</text>
</comment>
<comment type="similarity">
    <text evidence="1">Belongs to the UPF0330 family.</text>
</comment>
<comment type="sequence caution" evidence="2">
    <conflict type="erroneous initiation">
        <sequence resource="EMBL-CDS" id="AAL80898"/>
    </conflict>
    <text>Extended N-terminus.</text>
</comment>
<organism>
    <name type="scientific">Pyrococcus furiosus (strain ATCC 43587 / DSM 3638 / JCM 8422 / Vc1)</name>
    <dbReference type="NCBI Taxonomy" id="186497"/>
    <lineage>
        <taxon>Archaea</taxon>
        <taxon>Methanobacteriati</taxon>
        <taxon>Methanobacteriota</taxon>
        <taxon>Thermococci</taxon>
        <taxon>Thermococcales</taxon>
        <taxon>Thermococcaceae</taxon>
        <taxon>Pyrococcus</taxon>
    </lineage>
</organism>
<name>VAPB4_PYRFU</name>
<accession>Q8U2Q8</accession>
<feature type="chain" id="PRO_0000157111" description="Putative antitoxin VapB4">
    <location>
        <begin position="1"/>
        <end position="78"/>
    </location>
</feature>
<proteinExistence type="inferred from homology"/>
<reference key="1">
    <citation type="journal article" date="1999" name="Genetics">
        <title>Divergence of the hyperthermophilic archaea Pyrococcus furiosus and P. horikoshii inferred from complete genomic sequences.</title>
        <authorList>
            <person name="Maeder D.L."/>
            <person name="Weiss R.B."/>
            <person name="Dunn D.M."/>
            <person name="Cherry J.L."/>
            <person name="Gonzalez J.M."/>
            <person name="DiRuggiero J."/>
            <person name="Robb F.T."/>
        </authorList>
    </citation>
    <scope>NUCLEOTIDE SEQUENCE [LARGE SCALE GENOMIC DNA]</scope>
    <source>
        <strain>ATCC 43587 / DSM 3638 / JCM 8422 / Vc1</strain>
    </source>
</reference>
<reference key="2">
    <citation type="journal article" date="2005" name="Nucleic Acids Res.">
        <title>Toxin-antitoxin loci are highly abundant in free-living but lost from host-associated prokaryotes.</title>
        <authorList>
            <person name="Pandey D.P."/>
            <person name="Gerdes K."/>
        </authorList>
    </citation>
    <scope>POSSIBLE FUNCTION</scope>
    <source>
        <strain>ATCC 43587 / DSM 3638 / JCM 8422 / Vc1</strain>
    </source>
</reference>
<sequence>MVKTITVSDDVYNELLRIKGKKSFSELLRELLREKKGNSVALKHIYGILNGEEYRETRKRLKELEKEFEKWKQFLTQV</sequence>